<comment type="function">
    <text evidence="1">Binds to 23S rRNA. Forms part of two intersubunit bridges in the 70S ribosome.</text>
</comment>
<comment type="subunit">
    <text evidence="1">Part of the 50S ribosomal subunit. Forms a cluster with proteins L3 and L19. In the 70S ribosome, L14 and L19 interact and together make contacts with the 16S rRNA in bridges B5 and B8.</text>
</comment>
<comment type="similarity">
    <text evidence="1">Belongs to the universal ribosomal protein uL14 family.</text>
</comment>
<organism>
    <name type="scientific">Stenotrophomonas maltophilia (strain R551-3)</name>
    <dbReference type="NCBI Taxonomy" id="391008"/>
    <lineage>
        <taxon>Bacteria</taxon>
        <taxon>Pseudomonadati</taxon>
        <taxon>Pseudomonadota</taxon>
        <taxon>Gammaproteobacteria</taxon>
        <taxon>Lysobacterales</taxon>
        <taxon>Lysobacteraceae</taxon>
        <taxon>Stenotrophomonas</taxon>
        <taxon>Stenotrophomonas maltophilia group</taxon>
    </lineage>
</organism>
<feature type="chain" id="PRO_1000144334" description="Large ribosomal subunit protein uL14">
    <location>
        <begin position="1"/>
        <end position="122"/>
    </location>
</feature>
<accession>B4SKX3</accession>
<gene>
    <name evidence="1" type="primary">rplN</name>
    <name type="ordered locus">Smal_0766</name>
</gene>
<keyword id="KW-0687">Ribonucleoprotein</keyword>
<keyword id="KW-0689">Ribosomal protein</keyword>
<keyword id="KW-0694">RNA-binding</keyword>
<keyword id="KW-0699">rRNA-binding</keyword>
<name>RL14_STRM5</name>
<protein>
    <recommendedName>
        <fullName evidence="1">Large ribosomal subunit protein uL14</fullName>
    </recommendedName>
    <alternativeName>
        <fullName evidence="2">50S ribosomal protein L14</fullName>
    </alternativeName>
</protein>
<sequence length="122" mass="13424">MIQMQSYLDVADNSGAKQVMCFKVLGGSKRRYAGIGDIIKVTVKDAIPRGKVKKGEVYDAVVVRTRKGVRRADGSLIRFDGNAAVLLNSKQEPIGTRIFGPVTRELRSEKFMKIVSLAPEVL</sequence>
<evidence type="ECO:0000255" key="1">
    <source>
        <dbReference type="HAMAP-Rule" id="MF_01367"/>
    </source>
</evidence>
<evidence type="ECO:0000305" key="2"/>
<dbReference type="EMBL" id="CP001111">
    <property type="protein sequence ID" value="ACF50471.1"/>
    <property type="molecule type" value="Genomic_DNA"/>
</dbReference>
<dbReference type="RefSeq" id="WP_004145357.1">
    <property type="nucleotide sequence ID" value="NC_011071.1"/>
</dbReference>
<dbReference type="SMR" id="B4SKX3"/>
<dbReference type="STRING" id="391008.Smal_0766"/>
<dbReference type="GeneID" id="93831946"/>
<dbReference type="KEGG" id="smt:Smal_0766"/>
<dbReference type="eggNOG" id="COG0093">
    <property type="taxonomic scope" value="Bacteria"/>
</dbReference>
<dbReference type="HOGENOM" id="CLU_095071_2_1_6"/>
<dbReference type="OrthoDB" id="9806379at2"/>
<dbReference type="Proteomes" id="UP000001867">
    <property type="component" value="Chromosome"/>
</dbReference>
<dbReference type="GO" id="GO:0022625">
    <property type="term" value="C:cytosolic large ribosomal subunit"/>
    <property type="evidence" value="ECO:0007669"/>
    <property type="project" value="TreeGrafter"/>
</dbReference>
<dbReference type="GO" id="GO:0070180">
    <property type="term" value="F:large ribosomal subunit rRNA binding"/>
    <property type="evidence" value="ECO:0007669"/>
    <property type="project" value="TreeGrafter"/>
</dbReference>
<dbReference type="GO" id="GO:0003735">
    <property type="term" value="F:structural constituent of ribosome"/>
    <property type="evidence" value="ECO:0007669"/>
    <property type="project" value="InterPro"/>
</dbReference>
<dbReference type="GO" id="GO:0006412">
    <property type="term" value="P:translation"/>
    <property type="evidence" value="ECO:0007669"/>
    <property type="project" value="UniProtKB-UniRule"/>
</dbReference>
<dbReference type="CDD" id="cd00337">
    <property type="entry name" value="Ribosomal_uL14"/>
    <property type="match status" value="1"/>
</dbReference>
<dbReference type="FunFam" id="2.40.150.20:FF:000001">
    <property type="entry name" value="50S ribosomal protein L14"/>
    <property type="match status" value="1"/>
</dbReference>
<dbReference type="Gene3D" id="2.40.150.20">
    <property type="entry name" value="Ribosomal protein L14"/>
    <property type="match status" value="1"/>
</dbReference>
<dbReference type="HAMAP" id="MF_01367">
    <property type="entry name" value="Ribosomal_uL14"/>
    <property type="match status" value="1"/>
</dbReference>
<dbReference type="InterPro" id="IPR000218">
    <property type="entry name" value="Ribosomal_uL14"/>
</dbReference>
<dbReference type="InterPro" id="IPR005745">
    <property type="entry name" value="Ribosomal_uL14_bac-type"/>
</dbReference>
<dbReference type="InterPro" id="IPR019972">
    <property type="entry name" value="Ribosomal_uL14_CS"/>
</dbReference>
<dbReference type="InterPro" id="IPR036853">
    <property type="entry name" value="Ribosomal_uL14_sf"/>
</dbReference>
<dbReference type="NCBIfam" id="TIGR01067">
    <property type="entry name" value="rplN_bact"/>
    <property type="match status" value="1"/>
</dbReference>
<dbReference type="PANTHER" id="PTHR11761">
    <property type="entry name" value="50S/60S RIBOSOMAL PROTEIN L14/L23"/>
    <property type="match status" value="1"/>
</dbReference>
<dbReference type="PANTHER" id="PTHR11761:SF3">
    <property type="entry name" value="LARGE RIBOSOMAL SUBUNIT PROTEIN UL14M"/>
    <property type="match status" value="1"/>
</dbReference>
<dbReference type="Pfam" id="PF00238">
    <property type="entry name" value="Ribosomal_L14"/>
    <property type="match status" value="1"/>
</dbReference>
<dbReference type="SMART" id="SM01374">
    <property type="entry name" value="Ribosomal_L14"/>
    <property type="match status" value="1"/>
</dbReference>
<dbReference type="SUPFAM" id="SSF50193">
    <property type="entry name" value="Ribosomal protein L14"/>
    <property type="match status" value="1"/>
</dbReference>
<dbReference type="PROSITE" id="PS00049">
    <property type="entry name" value="RIBOSOMAL_L14"/>
    <property type="match status" value="1"/>
</dbReference>
<reference key="1">
    <citation type="submission" date="2008-06" db="EMBL/GenBank/DDBJ databases">
        <title>Complete sequence of Stenotrophomonas maltophilia R551-3.</title>
        <authorList>
            <consortium name="US DOE Joint Genome Institute"/>
            <person name="Lucas S."/>
            <person name="Copeland A."/>
            <person name="Lapidus A."/>
            <person name="Glavina del Rio T."/>
            <person name="Dalin E."/>
            <person name="Tice H."/>
            <person name="Pitluck S."/>
            <person name="Chain P."/>
            <person name="Malfatti S."/>
            <person name="Shin M."/>
            <person name="Vergez L."/>
            <person name="Lang D."/>
            <person name="Schmutz J."/>
            <person name="Larimer F."/>
            <person name="Land M."/>
            <person name="Hauser L."/>
            <person name="Kyrpides N."/>
            <person name="Mikhailova N."/>
            <person name="Taghavi S."/>
            <person name="Monchy S."/>
            <person name="Newman L."/>
            <person name="Vangronsveld J."/>
            <person name="van der Lelie D."/>
            <person name="Richardson P."/>
        </authorList>
    </citation>
    <scope>NUCLEOTIDE SEQUENCE [LARGE SCALE GENOMIC DNA]</scope>
    <source>
        <strain>R551-3</strain>
    </source>
</reference>
<proteinExistence type="inferred from homology"/>